<organism>
    <name type="scientific">Salmonella paratyphi C (strain RKS4594)</name>
    <dbReference type="NCBI Taxonomy" id="476213"/>
    <lineage>
        <taxon>Bacteria</taxon>
        <taxon>Pseudomonadati</taxon>
        <taxon>Pseudomonadota</taxon>
        <taxon>Gammaproteobacteria</taxon>
        <taxon>Enterobacterales</taxon>
        <taxon>Enterobacteriaceae</taxon>
        <taxon>Salmonella</taxon>
    </lineage>
</organism>
<reference key="1">
    <citation type="journal article" date="2009" name="PLoS ONE">
        <title>Salmonella paratyphi C: genetic divergence from Salmonella choleraesuis and pathogenic convergence with Salmonella typhi.</title>
        <authorList>
            <person name="Liu W.-Q."/>
            <person name="Feng Y."/>
            <person name="Wang Y."/>
            <person name="Zou Q.-H."/>
            <person name="Chen F."/>
            <person name="Guo J.-T."/>
            <person name="Peng Y.-H."/>
            <person name="Jin Y."/>
            <person name="Li Y.-G."/>
            <person name="Hu S.-N."/>
            <person name="Johnston R.N."/>
            <person name="Liu G.-R."/>
            <person name="Liu S.-L."/>
        </authorList>
    </citation>
    <scope>NUCLEOTIDE SEQUENCE [LARGE SCALE GENOMIC DNA]</scope>
    <source>
        <strain>RKS4594</strain>
    </source>
</reference>
<keyword id="KW-0227">DNA damage</keyword>
<keyword id="KW-0234">DNA repair</keyword>
<keyword id="KW-0235">DNA replication</keyword>
<keyword id="KW-0436">Ligase</keyword>
<keyword id="KW-0520">NAD</keyword>
<proteinExistence type="inferred from homology"/>
<name>LIGB_SALPC</name>
<accession>C0Q1X9</accession>
<evidence type="ECO:0000255" key="1">
    <source>
        <dbReference type="HAMAP-Rule" id="MF_01587"/>
    </source>
</evidence>
<protein>
    <recommendedName>
        <fullName evidence="1">DNA ligase B</fullName>
        <ecNumber evidence="1">6.5.1.2</ecNumber>
    </recommendedName>
    <alternativeName>
        <fullName evidence="1">Polydeoxyribonucleotide synthase [NAD(+)] B</fullName>
    </alternativeName>
</protein>
<comment type="function">
    <text evidence="1">Catalyzes the formation of phosphodiester linkages between 5'-phosphoryl and 3'-hydroxyl groups in double-stranded DNA using NAD as a coenzyme and as the energy source for the reaction.</text>
</comment>
<comment type="catalytic activity">
    <reaction evidence="1">
        <text>NAD(+) + (deoxyribonucleotide)n-3'-hydroxyl + 5'-phospho-(deoxyribonucleotide)m = (deoxyribonucleotide)n+m + AMP + beta-nicotinamide D-nucleotide.</text>
        <dbReference type="EC" id="6.5.1.2"/>
    </reaction>
</comment>
<comment type="similarity">
    <text evidence="1">Belongs to the NAD-dependent DNA ligase family. LigB subfamily.</text>
</comment>
<gene>
    <name evidence="1" type="primary">ligB</name>
    <name type="ordered locus">SPC_3821</name>
</gene>
<sequence>MRLWKSMAWGILLWHSQSGALCPAWPPARAAEEITRLQQQLADWNDIYWKQGVSAVDDSVYDQLSARLVQWQRCVGQDVSSTPVSPPLNGTTMHPVAHTGVRKLADRQAVEQWMRGRSELWVQPKVDGVAVTLVYQNGKLTRAISRGNGLQGEDWTPKIRLIPSIPQTTQGALANAVLQGEIFLQREGHIQQRMGGMNARSKVAGMLMRQDNASALNSLGIFIWAWPDGPANMPERLSQLAKAGFSLTNKYTLAVKDASEVERARQSWLTSALPFVTDGVVIRMAKEPASQHWRPGQGDWLAAWKYPPVAQVAQVSAIQFSVGKSGKITVVASLVPVILDDKRVQRVNIGSVKRWEAWDIAPGDQILVSLAGQGIPRLDEVVWRSRERSKPVPPDSHFNSLTCFYASATCQEQFISRLVWLGSRSALGLDGMGEASWRALHQTHRFEHIFSWLALTSAQIANTPGFAKGKSEQIWRQFNLARRQPFTRWIMAMDIPLTQAALQASGDRSWEQLLMRTEQHWRQLPATGERRAGRVIDWRDNPQIKTLSRWLAAQHIPGFGS</sequence>
<feature type="chain" id="PRO_1000185681" description="DNA ligase B">
    <location>
        <begin position="1"/>
        <end position="561"/>
    </location>
</feature>
<feature type="active site" description="N6-AMP-lysine intermediate" evidence="1">
    <location>
        <position position="125"/>
    </location>
</feature>
<dbReference type="EC" id="6.5.1.2" evidence="1"/>
<dbReference type="EMBL" id="CP000857">
    <property type="protein sequence ID" value="ACN47895.1"/>
    <property type="molecule type" value="Genomic_DNA"/>
</dbReference>
<dbReference type="RefSeq" id="WP_001241849.1">
    <property type="nucleotide sequence ID" value="NC_012125.1"/>
</dbReference>
<dbReference type="SMR" id="C0Q1X9"/>
<dbReference type="KEGG" id="sei:SPC_3821"/>
<dbReference type="HOGENOM" id="CLU_489786_0_0_6"/>
<dbReference type="Proteomes" id="UP000001599">
    <property type="component" value="Chromosome"/>
</dbReference>
<dbReference type="GO" id="GO:0003911">
    <property type="term" value="F:DNA ligase (NAD+) activity"/>
    <property type="evidence" value="ECO:0007669"/>
    <property type="project" value="UniProtKB-UniRule"/>
</dbReference>
<dbReference type="GO" id="GO:0006281">
    <property type="term" value="P:DNA repair"/>
    <property type="evidence" value="ECO:0007669"/>
    <property type="project" value="UniProtKB-KW"/>
</dbReference>
<dbReference type="GO" id="GO:0006260">
    <property type="term" value="P:DNA replication"/>
    <property type="evidence" value="ECO:0007669"/>
    <property type="project" value="UniProtKB-KW"/>
</dbReference>
<dbReference type="FunFam" id="1.10.287.610:FF:000003">
    <property type="entry name" value="DNA ligase B"/>
    <property type="match status" value="1"/>
</dbReference>
<dbReference type="FunFam" id="2.40.50.140:FF:000139">
    <property type="entry name" value="DNA ligase B"/>
    <property type="match status" value="1"/>
</dbReference>
<dbReference type="FunFam" id="3.30.470.30:FF:000007">
    <property type="entry name" value="DNA ligase B"/>
    <property type="match status" value="1"/>
</dbReference>
<dbReference type="Gene3D" id="1.10.150.20">
    <property type="entry name" value="5' to 3' exonuclease, C-terminal subdomain"/>
    <property type="match status" value="1"/>
</dbReference>
<dbReference type="Gene3D" id="3.30.470.30">
    <property type="entry name" value="DNA ligase/mRNA capping enzyme"/>
    <property type="match status" value="1"/>
</dbReference>
<dbReference type="Gene3D" id="1.10.287.610">
    <property type="entry name" value="Helix hairpin bin"/>
    <property type="match status" value="1"/>
</dbReference>
<dbReference type="Gene3D" id="2.40.50.140">
    <property type="entry name" value="Nucleic acid-binding proteins"/>
    <property type="match status" value="1"/>
</dbReference>
<dbReference type="HAMAP" id="MF_01587">
    <property type="entry name" value="DNA_ligase_B"/>
    <property type="match status" value="1"/>
</dbReference>
<dbReference type="InterPro" id="IPR018239">
    <property type="entry name" value="DNA_ligase_AS"/>
</dbReference>
<dbReference type="InterPro" id="IPR020923">
    <property type="entry name" value="DNA_ligase_B"/>
</dbReference>
<dbReference type="InterPro" id="IPR033136">
    <property type="entry name" value="DNA_ligase_CS"/>
</dbReference>
<dbReference type="InterPro" id="IPR013839">
    <property type="entry name" value="DNAligase_adenylation"/>
</dbReference>
<dbReference type="InterPro" id="IPR013840">
    <property type="entry name" value="DNAligase_N"/>
</dbReference>
<dbReference type="InterPro" id="IPR012340">
    <property type="entry name" value="NA-bd_OB-fold"/>
</dbReference>
<dbReference type="InterPro" id="IPR050326">
    <property type="entry name" value="NAD_dep_DNA_ligaseB"/>
</dbReference>
<dbReference type="InterPro" id="IPR004150">
    <property type="entry name" value="NAD_DNA_ligase_OB"/>
</dbReference>
<dbReference type="InterPro" id="IPR010994">
    <property type="entry name" value="RuvA_2-like"/>
</dbReference>
<dbReference type="NCBIfam" id="NF005987">
    <property type="entry name" value="PRK08097.1"/>
    <property type="match status" value="1"/>
</dbReference>
<dbReference type="PANTHER" id="PTHR47810">
    <property type="entry name" value="DNA LIGASE"/>
    <property type="match status" value="1"/>
</dbReference>
<dbReference type="PANTHER" id="PTHR47810:SF1">
    <property type="entry name" value="DNA LIGASE B"/>
    <property type="match status" value="1"/>
</dbReference>
<dbReference type="Pfam" id="PF01653">
    <property type="entry name" value="DNA_ligase_aden"/>
    <property type="match status" value="1"/>
</dbReference>
<dbReference type="Pfam" id="PF03120">
    <property type="entry name" value="DNA_ligase_OB"/>
    <property type="match status" value="1"/>
</dbReference>
<dbReference type="SMART" id="SM00532">
    <property type="entry name" value="LIGANc"/>
    <property type="match status" value="1"/>
</dbReference>
<dbReference type="SUPFAM" id="SSF56091">
    <property type="entry name" value="DNA ligase/mRNA capping enzyme, catalytic domain"/>
    <property type="match status" value="1"/>
</dbReference>
<dbReference type="SUPFAM" id="SSF50249">
    <property type="entry name" value="Nucleic acid-binding proteins"/>
    <property type="match status" value="1"/>
</dbReference>
<dbReference type="SUPFAM" id="SSF47781">
    <property type="entry name" value="RuvA domain 2-like"/>
    <property type="match status" value="1"/>
</dbReference>
<dbReference type="PROSITE" id="PS01055">
    <property type="entry name" value="DNA_LIGASE_N1"/>
    <property type="match status" value="1"/>
</dbReference>
<dbReference type="PROSITE" id="PS01056">
    <property type="entry name" value="DNA_LIGASE_N2"/>
    <property type="match status" value="1"/>
</dbReference>